<protein>
    <recommendedName>
        <fullName evidence="13">Regulatory ATPase RavA</fullName>
        <ecNumber evidence="2 7 8 11">3.6.1.-</ecNumber>
    </recommendedName>
    <alternativeName>
        <fullName evidence="12">Regulatory ATPase variant A</fullName>
    </alternativeName>
</protein>
<accession>P31473</accession>
<accession>Q2M864</accession>
<comment type="function">
    <text evidence="2 4 7 8 9 10 11">Component of the RavA-ViaA chaperone complex, which may act on the membrane to optimize the function of some of the respiratory chains (PubMed:16301313, PubMed:24454883, PubMed:27979649, PubMed:36127320, PubMed:36625597). RavA functions as an ATPase (PubMed:16301313, PubMed:27979649, PubMed:31992852, PubMed:37660904).</text>
</comment>
<comment type="function">
    <text evidence="2 3 4 6 7 9 10 11">The RavA-ViaA system is involved in the regulation of two respiratory complexes, the fumarate reductase (Frd) electron transport complex and the NADH-quinone oxidoreductase complex (NDH-1 or Nuo complex) (PubMed:24454883, PubMed:27979649). It modulates the activity of the Frd complex, signifying a potential regulatory function during bacterial anaerobic respiration with fumarate as the terminal electron acceptor (PubMed:27979649). Interaction of RavA-ViaA with FrdA results in a decrease in Frd activity (PubMed:27979649). It also interacts with the Nuo complex, known to be involved in both the aerobic and the anaerobic respiration (PubMed:24454883). The RavA-ViaA system binds to specific membrane phospholipids, and might chaperone certain respiratory complexes by acting on lipid microdomains in which these complexes are inserted (PubMed:36127320). The RavA-ViaA system also plays a negative role in bacterial persistence upon treatment with antibiotics through the association of the chaperone complex with Frd (PubMed:37660904). It sensitizes cells to sublethal concentrations of aminoglycoside (AG) antibiotics (PubMed:36127320, PubMed:36625597, PubMed:37660904). The system can facilitate uptake of AG across the membrane when cells are in a low energy state (PubMed:36625597). It sensitizes cells to AG through a proton motive force-dependent mechanism (PubMed:36127320, PubMed:36625597). Under fumarate respiration conditions, it sensitizes cells to AG via a FrdA-dependent mechanism (PubMed:36625597). It does not sensitize cells grown under nitrate respiration to gentamicin (PubMed:36625597). In addition, RavA is involved in the bacterial acid stress response (PubMed:27080013). Acts by binding to the inducible lysine decarboxylase CadA/LdcI, a key enzyme in the acid stress response, which reduces binding of CadA/LdcI to its potent inhibitor, the stringent response alarmone ppGpp, and thus modulates CadA/LdcI activity (PubMed:21148420, PubMed:27080013). RavA also has GTPase activity in vitro (PubMed:16301313). GTP hydrolysis is much slower than ATP hydrolysis at lower enzyme/substrate concentrations but reaches comparable levels with increasing amounts of enzyme/substrate (PubMed:16301313).</text>
</comment>
<comment type="catalytic activity">
    <reaction evidence="2 7 8 11">
        <text>ATP + H2O = ADP + phosphate + H(+)</text>
        <dbReference type="Rhea" id="RHEA:13065"/>
        <dbReference type="ChEBI" id="CHEBI:15377"/>
        <dbReference type="ChEBI" id="CHEBI:15378"/>
        <dbReference type="ChEBI" id="CHEBI:30616"/>
        <dbReference type="ChEBI" id="CHEBI:43474"/>
        <dbReference type="ChEBI" id="CHEBI:456216"/>
    </reaction>
</comment>
<comment type="activity regulation">
    <text evidence="2 7 8 11">ATPase activity is stimulated by ViaA (PubMed:16301313, PubMed:27979649, PubMed:37660904). ATPase activity is also stimulated by interaction with the inducible lysine decarboxylase CadA/LdcI at low pH (PubMed:16301313, PubMed:31992852). The complex formed with CadA/LdcI represents a possible means of regulating RavA activity in response to acid stress conditions (PubMed:16301313). CadA/LdcI may stabilize RavA oligomers under acid stress conditions (PubMed:16301313).</text>
</comment>
<comment type="biophysicochemical properties">
    <kinetics>
        <KM evidence="2">790 uM for ATP (at pH 7.5)</KM>
        <text evidence="2">kcat is 1.4 sec(-1) with ATP as substrate (at pH 7.5).</text>
    </kinetics>
    <phDependence>
        <text evidence="2">Optimum pH is 7.5 for ATPase activity.</text>
    </phDependence>
</comment>
<comment type="subunit">
    <text evidence="2 3 4 5 6 7 8 9 11">Homohexamer (PubMed:16301313, PubMed:21148420, PubMed:25097238, PubMed:31992852). Interacts with ViaA (PubMed:16301313, PubMed:27979649, PubMed:36127320, PubMed:37660904). Interacts with specific subunits of the NADH-quinone oxidoreductase complex (NDH-1 or Nuo complex), particularly with NuoA and NuoF under aerobic conditions, and with the fused NuoCD under anaerobic conditions (PubMed:24454883). Interacts strongly with the inducible lysine decarboxylase CadA/LdcI, forming a large cage-like structure composed of two CadA/LdcI decamers and five RavA hexamers (PubMed:16301313, PubMed:21148420, PubMed:25097238, PubMed:27080013, PubMed:31992852). Does not interact with the constitutive lysine decarboxylase LdcC (PubMed:16301313). Interactions with ViaA or CadA/LdcI and phosphatidylglycerol are mutually exclusive (PubMed:36127320).</text>
</comment>
<comment type="interaction">
    <interactant intactId="EBI-561223">
        <id>P31473</id>
    </interactant>
    <interactant intactId="EBI-545922">
        <id>P0A9H3</id>
        <label>cadA</label>
    </interactant>
    <organismsDiffer>false</organismsDiffer>
    <experiments>13</experiments>
</comment>
<comment type="interaction">
    <interactant intactId="EBI-561223">
        <id>P31473</id>
    </interactant>
    <interactant intactId="EBI-561223">
        <id>P31473</id>
        <label>ravA</label>
    </interactant>
    <organismsDiffer>false</organismsDiffer>
    <experiments>7</experiments>
</comment>
<comment type="subcellular location">
    <subcellularLocation>
        <location evidence="2 4 9">Cytoplasm</location>
    </subcellularLocation>
    <subcellularLocation>
        <location evidence="9">Cell inner membrane</location>
        <topology evidence="9">Peripheral membrane protein</topology>
        <orientation evidence="9">Cytoplasmic side</orientation>
    </subcellularLocation>
    <text evidence="9">Localizes to the membrane via interaction with specific lipids.</text>
</comment>
<comment type="induction">
    <text evidence="2 7">Part of the ravA-viaA operon, which is under the direct control of sigma S in aerobically grown cells (PubMed:16301313). In cells grown under oxygen-limiting conditions, expression is largely dependent on the anaerobic transcriptional regulator Fnr (PubMed:27979649). The operon is coexpressed with multiple anaerobic respiratory genes, many of which are regulated by Fnr (PubMed:27979649). Levels increase toward late log/early stationary phase (PubMed:16301313).</text>
</comment>
<comment type="domain">
    <text evidence="3 11">A protomer can be divided into three domains: the N-terminal domain is the AAA+ module, which is composed of two subdomains, the alpha-beta-alpha subdomain and the all-alpha subdomain (PubMed:21148420). The second domain is a discontinuous triple-helical domain (PubMed:21148420, PubMed:37660904). The third domain, named the LARA domain, contains a compact antiparallel beta-barrel-like domain forming a unique fold (PubMed:21148420, PubMed:37660904). Binding between ViaA and the triple-helical bundle domain of RavA results in the enhancement of the ATPase activity of RavA (PubMed:37660904). The LARA domain mediates RavA-CadA/LdcI interactions (PubMed:21148420).</text>
</comment>
<comment type="disruption phenotype">
    <text evidence="11">The double ravA-viaA deletion mutant shows increased persistence when grown in the presence of fumarate and kanamycin.</text>
</comment>
<comment type="similarity">
    <text evidence="1 13">Belongs to the RavA family.</text>
</comment>
<comment type="sequence caution" evidence="13">
    <conflict type="frameshift">
        <sequence resource="EMBL-CDS" id="AAA62099"/>
    </conflict>
</comment>
<reference key="1">
    <citation type="journal article" date="1993" name="Genomics">
        <title>DNA sequence and analysis of 136 kilobases of the Escherichia coli genome: organizational symmetry around the origin of replication.</title>
        <authorList>
            <person name="Burland V.D."/>
            <person name="Plunkett G. III"/>
            <person name="Daniels D.L."/>
            <person name="Blattner F.R."/>
        </authorList>
    </citation>
    <scope>NUCLEOTIDE SEQUENCE [LARGE SCALE GENOMIC DNA]</scope>
    <source>
        <strain>K12 / MG1655 / ATCC 47076</strain>
    </source>
</reference>
<reference key="2">
    <citation type="journal article" date="1997" name="Science">
        <title>The complete genome sequence of Escherichia coli K-12.</title>
        <authorList>
            <person name="Blattner F.R."/>
            <person name="Plunkett G. III"/>
            <person name="Bloch C.A."/>
            <person name="Perna N.T."/>
            <person name="Burland V."/>
            <person name="Riley M."/>
            <person name="Collado-Vides J."/>
            <person name="Glasner J.D."/>
            <person name="Rode C.K."/>
            <person name="Mayhew G.F."/>
            <person name="Gregor J."/>
            <person name="Davis N.W."/>
            <person name="Kirkpatrick H.A."/>
            <person name="Goeden M.A."/>
            <person name="Rose D.J."/>
            <person name="Mau B."/>
            <person name="Shao Y."/>
        </authorList>
    </citation>
    <scope>NUCLEOTIDE SEQUENCE [LARGE SCALE GENOMIC DNA]</scope>
    <scope>SEQUENCE REVISION</scope>
    <source>
        <strain>K12 / MG1655 / ATCC 47076</strain>
    </source>
</reference>
<reference key="3">
    <citation type="journal article" date="2006" name="Mol. Syst. Biol.">
        <title>Highly accurate genome sequences of Escherichia coli K-12 strains MG1655 and W3110.</title>
        <authorList>
            <person name="Hayashi K."/>
            <person name="Morooka N."/>
            <person name="Yamamoto Y."/>
            <person name="Fujita K."/>
            <person name="Isono K."/>
            <person name="Choi S."/>
            <person name="Ohtsubo E."/>
            <person name="Baba T."/>
            <person name="Wanner B.L."/>
            <person name="Mori H."/>
            <person name="Horiuchi T."/>
        </authorList>
    </citation>
    <scope>NUCLEOTIDE SEQUENCE [LARGE SCALE GENOMIC DNA]</scope>
    <source>
        <strain>K12 / W3110 / ATCC 27325 / DSM 5911</strain>
    </source>
</reference>
<reference key="4">
    <citation type="journal article" date="2006" name="J. Biol. Chem.">
        <title>Formation of a distinctive complex between the inducible bacterial lysine decarboxylase and a novel AAA+ ATPase.</title>
        <authorList>
            <person name="Snider J."/>
            <person name="Gutsche I."/>
            <person name="Lin M."/>
            <person name="Baby S."/>
            <person name="Cox B."/>
            <person name="Butland G."/>
            <person name="Greenblatt J."/>
            <person name="Emili A."/>
            <person name="Houry W.A."/>
        </authorList>
    </citation>
    <scope>FUNCTION</scope>
    <scope>CATALYTIC ACTIVITY</scope>
    <scope>ACTIVITY REGULATION</scope>
    <scope>BIOPHYSICOCHEMICAL PROPERTIES</scope>
    <scope>SUBUNIT</scope>
    <scope>SUBCELLULAR LOCATION</scope>
    <scope>INDUCTION</scope>
    <scope>INTERACTION WITH VIAA AND CADA/LDCI</scope>
    <source>
        <strain>K12 / MG1655 / ATCC 47076</strain>
    </source>
</reference>
<reference key="5">
    <citation type="journal article" date="2014" name="PLoS ONE">
        <title>The MoxR ATPase RavA and its cofactor ViaA interact with the NADH:ubiquinone oxidoreductase I in Escherichia coli.</title>
        <authorList>
            <person name="Wong K.S."/>
            <person name="Snider J.D."/>
            <person name="Graham C."/>
            <person name="Greenblatt J.F."/>
            <person name="Emili A."/>
            <person name="Babu M."/>
            <person name="Houry W.A."/>
        </authorList>
    </citation>
    <scope>FUNCTION</scope>
    <scope>INTERACTION WITH NUO SUBUNITS</scope>
    <scope>SUBCELLULAR LOCATION</scope>
    <scope>MUTAGENESIS OF LYS-52</scope>
    <source>
        <strain>K12 / MG1655 / ATCC 47076</strain>
    </source>
</reference>
<reference key="6">
    <citation type="journal article" date="2017" name="J. Mol. Biol.">
        <title>The RavA-ViaA Chaperone-Like System Interacts with and Modulates the Activity of the Fumarate Reductase Respiratory Complex.</title>
        <authorList>
            <person name="Wong K.S."/>
            <person name="Bhandari V."/>
            <person name="Janga S.C."/>
            <person name="Houry W.A."/>
        </authorList>
    </citation>
    <scope>FUNCTION</scope>
    <scope>CATALYTIC ACTIVITY</scope>
    <scope>ACTIVITY REGULATION</scope>
    <scope>INTERACTION WITH VIAA</scope>
    <scope>INDUCTION</scope>
</reference>
<reference key="7">
    <citation type="journal article" date="2022" name="Nat. Commun.">
        <title>The AAA+ ATPase RavA and its binding partner ViaA modulate E. coli aminoglycoside sensitivity through interaction with the inner membrane.</title>
        <authorList>
            <person name="Felix J."/>
            <person name="Bumba L."/>
            <person name="Liesche C."/>
            <person name="Fraudeau A."/>
            <person name="Rebeille F."/>
            <person name="El Khoury J.Y."/>
            <person name="Huard K."/>
            <person name="Gallet B."/>
            <person name="Moriscot C."/>
            <person name="Kleman J.P."/>
            <person name="Duhoo Y."/>
            <person name="Jessop M."/>
            <person name="Kandiah E."/>
            <person name="Barras F."/>
            <person name="Jouhet J."/>
            <person name="Gutsche I."/>
        </authorList>
    </citation>
    <scope>FUNCTION</scope>
    <scope>INTERACTION WITH VIAA</scope>
    <scope>INTERACTION WITH PHOSPHOLIPIDS</scope>
    <scope>SUBCELLULAR LOCATION</scope>
</reference>
<reference key="8">
    <citation type="journal article" date="2023" name="MBio">
        <title>Bioenergetic State of Escherichia coli Controls Aminoglycoside Susceptibility.</title>
        <authorList>
            <person name="El Khoury J.Y."/>
            <person name="Zamarreno Beas J."/>
            <person name="Huguenot A."/>
            <person name="Py B."/>
            <person name="Barras F."/>
        </authorList>
    </citation>
    <scope>FUNCTION</scope>
    <source>
        <strain>K12 / MG1655 / ATCC 47076</strain>
    </source>
</reference>
<reference key="9">
    <citation type="journal article" date="2023" name="J. Biol. Chem.">
        <title>The RavA-ViaA chaperone complex modulates bacterial persistence through its association with the fumarate reductase enzyme.</title>
        <authorList>
            <person name="Bhandari V."/>
            <person name="Reichheld S.E."/>
            <person name="Houliston S."/>
            <person name="Lemak A."/>
            <person name="Arrowsmith C.H."/>
            <person name="Sharpe S."/>
            <person name="Houry W.A."/>
        </authorList>
    </citation>
    <scope>FUNCTION</scope>
    <scope>CATALYTIC ACTIVITY</scope>
    <scope>ACTIVITY REGULATION</scope>
    <scope>INTERACTION WITH VIAA</scope>
    <scope>DOMAIN</scope>
    <scope>DISRUPTION PHENOTYPE</scope>
    <source>
        <strain>K12 / MG1655 / ATCC 47076</strain>
    </source>
</reference>
<reference evidence="16" key="10">
    <citation type="journal article" date="2010" name="Proc. Natl. Acad. Sci. U.S.A.">
        <title>Structure of RavA MoxR AAA+ protein reveals the design principles of a molecular cage modulating the inducible lysine decarboxylase activity.</title>
        <authorList>
            <person name="El Bakkouri M."/>
            <person name="Gutsche I."/>
            <person name="Kanjee U."/>
            <person name="Zhao B."/>
            <person name="Yu M."/>
            <person name="Goret G."/>
            <person name="Schoehn G."/>
            <person name="Burmeister W.P."/>
            <person name="Houry W.A."/>
        </authorList>
    </citation>
    <scope>X-RAY CRYSTALLOGRAPHY (2.91 ANGSTROMS) IN COMPLEX WITH ADP</scope>
    <scope>FUNCTION</scope>
    <scope>SUBUNIT</scope>
    <scope>INTERACTION WITH CADA/LDCI</scope>
    <scope>DOMAIN</scope>
    <scope>MUTAGENESIS OF 336-LEU--ALA-433</scope>
</reference>
<reference evidence="17 18" key="11">
    <citation type="journal article" date="2014" name="Elife">
        <title>Assembly principles of a unique cage formed by hexameric and decameric E. coli proteins.</title>
        <authorList>
            <person name="Malet H."/>
            <person name="Liu K."/>
            <person name="El Bakkouri M."/>
            <person name="Chan S.W."/>
            <person name="Effantin G."/>
            <person name="Bacia M."/>
            <person name="Houry W.A."/>
            <person name="Gutsche I."/>
        </authorList>
    </citation>
    <scope>STRUCTURE BY ELECTRON MICROSCOPY (7.50 ANGSTROMS) OF 329-440 IN COMPLEX WITH CADA/LDCI</scope>
    <scope>SUBUNIT</scope>
    <scope>INTERACTION WITH CADA/LDCI</scope>
</reference>
<reference key="12">
    <citation type="journal article" date="2014" name="Elife">
        <authorList>
            <person name="Malet H."/>
            <person name="Liu K."/>
            <person name="El Bakkouri M."/>
            <person name="Chan S.W."/>
            <person name="Effantin G."/>
            <person name="Bacia M."/>
            <person name="Houry W.A."/>
            <person name="Gutsche I."/>
        </authorList>
    </citation>
    <scope>ERRATUM OF PUBMED:25097238</scope>
</reference>
<reference evidence="19" key="13">
    <citation type="journal article" date="2016" name="Sci. Rep.">
        <title>Structural insights into the Escherichia coli lysine decarboxylases and molecular determinants of interaction with the AAA+ ATPase RavA.</title>
        <authorList>
            <person name="Kandiah E."/>
            <person name="Carriel D."/>
            <person name="Perard J."/>
            <person name="Malet H."/>
            <person name="Bacia M."/>
            <person name="Liu K."/>
            <person name="Chan S.W."/>
            <person name="Houry W.A."/>
            <person name="Ollagnier de Choudens S."/>
            <person name="Elsen S."/>
            <person name="Gutsche I."/>
        </authorList>
    </citation>
    <scope>STRUCTURE BY ELECTRON MICROSCOPY (6.20 ANGSTROMS) OF 332-437 IN COMPLEX WITH CADA/LDCI</scope>
    <scope>FUNCTION</scope>
    <scope>INTERACTION WITH CADA/LDCI</scope>
</reference>
<reference evidence="20 21 22 23" key="14">
    <citation type="journal article" date="2020" name="Commun. Biol.">
        <title>Structural insights into ATP hydrolysis by the MoxR ATPase RavA and the LdcI-RavA cage-like complex.</title>
        <authorList>
            <person name="Jessop M."/>
            <person name="Arragain B."/>
            <person name="Miras R."/>
            <person name="Fraudeau A."/>
            <person name="Huard K."/>
            <person name="Bacia-Verloop M."/>
            <person name="Catty P."/>
            <person name="Felix J."/>
            <person name="Malet H."/>
            <person name="Gutsche I."/>
        </authorList>
    </citation>
    <scope>STRUCTURE BY ELECTRON MICROSCOPY (6.00 ANGSTROMS) IN COMPLEXES WITH CADA/LDCI AND ADP</scope>
    <scope>FUNCTION</scope>
    <scope>CATALYTIC ACTIVITY</scope>
    <scope>ACTIVITY REGULATION</scope>
    <scope>SUBUNIT</scope>
    <scope>INTERACTION WITH CADA/LDCI</scope>
</reference>
<dbReference type="EC" id="3.6.1.-" evidence="2 7 8 11"/>
<dbReference type="EMBL" id="L10328">
    <property type="protein sequence ID" value="AAA62099.1"/>
    <property type="status" value="ALT_FRAME"/>
    <property type="molecule type" value="Genomic_DNA"/>
</dbReference>
<dbReference type="EMBL" id="U00096">
    <property type="protein sequence ID" value="AAC76769.2"/>
    <property type="molecule type" value="Genomic_DNA"/>
</dbReference>
<dbReference type="EMBL" id="AP009048">
    <property type="protein sequence ID" value="BAE77542.1"/>
    <property type="molecule type" value="Genomic_DNA"/>
</dbReference>
<dbReference type="PIR" id="C65178">
    <property type="entry name" value="C65178"/>
</dbReference>
<dbReference type="RefSeq" id="NP_418202.4">
    <property type="nucleotide sequence ID" value="NC_000913.3"/>
</dbReference>
<dbReference type="RefSeq" id="WP_001299914.1">
    <property type="nucleotide sequence ID" value="NZ_LN832404.1"/>
</dbReference>
<dbReference type="PDB" id="3NBX">
    <property type="method" value="X-ray"/>
    <property type="resolution" value="2.91 A"/>
    <property type="chains" value="X=1-498"/>
</dbReference>
<dbReference type="PDB" id="4UPB">
    <property type="method" value="EM"/>
    <property type="resolution" value="11.00 A"/>
    <property type="chains" value="C/D/E=1-498"/>
</dbReference>
<dbReference type="PDB" id="4UPF">
    <property type="method" value="EM"/>
    <property type="resolution" value="7.50 A"/>
    <property type="chains" value="D=329-440"/>
</dbReference>
<dbReference type="PDB" id="5FL2">
    <property type="method" value="EM"/>
    <property type="resolution" value="6.20 A"/>
    <property type="chains" value="K=332-437"/>
</dbReference>
<dbReference type="PDB" id="6Q7L">
    <property type="method" value="EM"/>
    <property type="resolution" value="7.60 A"/>
    <property type="chains" value="U=1-498"/>
</dbReference>
<dbReference type="PDB" id="6Q7M">
    <property type="method" value="EM"/>
    <property type="resolution" value="7.80 A"/>
    <property type="chains" value="U/V/W/X/Y/Z=1-497"/>
</dbReference>
<dbReference type="PDB" id="6SZA">
    <property type="method" value="EM"/>
    <property type="resolution" value="6.00 A"/>
    <property type="chains" value="A/B/C/D/E/F=1-498"/>
</dbReference>
<dbReference type="PDB" id="6SZB">
    <property type="method" value="EM"/>
    <property type="resolution" value="7.00 A"/>
    <property type="chains" value="A/B/C/D/E/F=1-498"/>
</dbReference>
<dbReference type="PDBsum" id="3NBX"/>
<dbReference type="PDBsum" id="4UPB"/>
<dbReference type="PDBsum" id="4UPF"/>
<dbReference type="PDBsum" id="5FL2"/>
<dbReference type="PDBsum" id="6Q7L"/>
<dbReference type="PDBsum" id="6Q7M"/>
<dbReference type="PDBsum" id="6SZA"/>
<dbReference type="PDBsum" id="6SZB"/>
<dbReference type="EMDB" id="EMD-10351"/>
<dbReference type="EMDB" id="EMD-10352"/>
<dbReference type="EMDB" id="EMD-2679"/>
<dbReference type="EMDB" id="EMD-2681"/>
<dbReference type="EMDB" id="EMD-3206"/>
<dbReference type="EMDB" id="EMD-4469"/>
<dbReference type="EMDB" id="EMD-4470"/>
<dbReference type="SMR" id="P31473"/>
<dbReference type="BioGRID" id="4262601">
    <property type="interactions" value="630"/>
</dbReference>
<dbReference type="DIP" id="DIP-12469N"/>
<dbReference type="FunCoup" id="P31473">
    <property type="interactions" value="257"/>
</dbReference>
<dbReference type="IntAct" id="P31473">
    <property type="interactions" value="22"/>
</dbReference>
<dbReference type="STRING" id="511145.b3746"/>
<dbReference type="jPOST" id="P31473"/>
<dbReference type="PaxDb" id="511145-b3746"/>
<dbReference type="EnsemblBacteria" id="AAC76769">
    <property type="protein sequence ID" value="AAC76769"/>
    <property type="gene ID" value="b3746"/>
</dbReference>
<dbReference type="GeneID" id="948256"/>
<dbReference type="KEGG" id="ecj:JW3725"/>
<dbReference type="KEGG" id="eco:b3746"/>
<dbReference type="PATRIC" id="fig|511145.12.peg.3871"/>
<dbReference type="EchoBASE" id="EB1682"/>
<dbReference type="eggNOG" id="COG0714">
    <property type="taxonomic scope" value="Bacteria"/>
</dbReference>
<dbReference type="HOGENOM" id="CLU_018678_1_0_6"/>
<dbReference type="InParanoid" id="P31473"/>
<dbReference type="OMA" id="HANAFEY"/>
<dbReference type="OrthoDB" id="1814213at2"/>
<dbReference type="PhylomeDB" id="P31473"/>
<dbReference type="BioCyc" id="EcoCyc:EG11731-MONOMER"/>
<dbReference type="BioCyc" id="MetaCyc:EG11731-MONOMER"/>
<dbReference type="EvolutionaryTrace" id="P31473"/>
<dbReference type="PRO" id="PR:P31473"/>
<dbReference type="Proteomes" id="UP000000625">
    <property type="component" value="Chromosome"/>
</dbReference>
<dbReference type="GO" id="GO:0005737">
    <property type="term" value="C:cytoplasm"/>
    <property type="evidence" value="ECO:0000314"/>
    <property type="project" value="EcoCyc"/>
</dbReference>
<dbReference type="GO" id="GO:0005829">
    <property type="term" value="C:cytosol"/>
    <property type="evidence" value="ECO:0000314"/>
    <property type="project" value="EcoCyc"/>
</dbReference>
<dbReference type="GO" id="GO:0005524">
    <property type="term" value="F:ATP binding"/>
    <property type="evidence" value="ECO:0007669"/>
    <property type="project" value="UniProtKB-KW"/>
</dbReference>
<dbReference type="GO" id="GO:0016887">
    <property type="term" value="F:ATP hydrolysis activity"/>
    <property type="evidence" value="ECO:0000314"/>
    <property type="project" value="EcoCyc"/>
</dbReference>
<dbReference type="GO" id="GO:0042802">
    <property type="term" value="F:identical protein binding"/>
    <property type="evidence" value="ECO:0000353"/>
    <property type="project" value="IntAct"/>
</dbReference>
<dbReference type="CDD" id="cd00009">
    <property type="entry name" value="AAA"/>
    <property type="match status" value="1"/>
</dbReference>
<dbReference type="FunFam" id="3.40.50.300:FF:000410">
    <property type="entry name" value="ATPase RavA"/>
    <property type="match status" value="1"/>
</dbReference>
<dbReference type="Gene3D" id="1.20.58.1510">
    <property type="match status" value="1"/>
</dbReference>
<dbReference type="Gene3D" id="2.40.128.430">
    <property type="match status" value="1"/>
</dbReference>
<dbReference type="Gene3D" id="3.40.50.300">
    <property type="entry name" value="P-loop containing nucleotide triphosphate hydrolases"/>
    <property type="match status" value="1"/>
</dbReference>
<dbReference type="HAMAP" id="MF_01625">
    <property type="entry name" value="ATPase_RavA"/>
    <property type="match status" value="1"/>
</dbReference>
<dbReference type="InterPro" id="IPR003593">
    <property type="entry name" value="AAA+_ATPase"/>
</dbReference>
<dbReference type="InterPro" id="IPR023671">
    <property type="entry name" value="ATPase_RavA"/>
</dbReference>
<dbReference type="InterPro" id="IPR022547">
    <property type="entry name" value="ATPase_RavA_C"/>
</dbReference>
<dbReference type="InterPro" id="IPR045427">
    <property type="entry name" value="MoxR"/>
</dbReference>
<dbReference type="InterPro" id="IPR027417">
    <property type="entry name" value="P-loop_NTPase"/>
</dbReference>
<dbReference type="InterPro" id="IPR041538">
    <property type="entry name" value="RavA-like_AAA_lid"/>
</dbReference>
<dbReference type="InterPro" id="IPR050513">
    <property type="entry name" value="RavA_ATPases"/>
</dbReference>
<dbReference type="InterPro" id="IPR046898">
    <property type="entry name" value="RavA_LARA_dom"/>
</dbReference>
<dbReference type="InterPro" id="IPR046932">
    <property type="entry name" value="RavA_LARA_sf"/>
</dbReference>
<dbReference type="NCBIfam" id="NF010054">
    <property type="entry name" value="PRK13531.1"/>
    <property type="match status" value="1"/>
</dbReference>
<dbReference type="PANTHER" id="PTHR32204">
    <property type="entry name" value="ATPASE RAVA"/>
    <property type="match status" value="1"/>
</dbReference>
<dbReference type="PANTHER" id="PTHR32204:SF0">
    <property type="entry name" value="ATPASE RAVA"/>
    <property type="match status" value="1"/>
</dbReference>
<dbReference type="Pfam" id="PF17868">
    <property type="entry name" value="AAA_lid_8"/>
    <property type="match status" value="1"/>
</dbReference>
<dbReference type="Pfam" id="PF12592">
    <property type="entry name" value="ATPase_RavA_C"/>
    <property type="match status" value="1"/>
</dbReference>
<dbReference type="Pfam" id="PF20030">
    <property type="entry name" value="bpMoxR"/>
    <property type="match status" value="1"/>
</dbReference>
<dbReference type="Pfam" id="PF20265">
    <property type="entry name" value="LARA_dom"/>
    <property type="match status" value="1"/>
</dbReference>
<dbReference type="SMART" id="SM00382">
    <property type="entry name" value="AAA"/>
    <property type="match status" value="1"/>
</dbReference>
<dbReference type="SUPFAM" id="SSF52540">
    <property type="entry name" value="P-loop containing nucleoside triphosphate hydrolases"/>
    <property type="match status" value="1"/>
</dbReference>
<gene>
    <name evidence="12" type="primary">ravA</name>
    <name type="synonym">yieN</name>
    <name type="ordered locus">b3746</name>
    <name type="ordered locus">JW3725</name>
</gene>
<organism>
    <name type="scientific">Escherichia coli (strain K12)</name>
    <dbReference type="NCBI Taxonomy" id="83333"/>
    <lineage>
        <taxon>Bacteria</taxon>
        <taxon>Pseudomonadati</taxon>
        <taxon>Pseudomonadota</taxon>
        <taxon>Gammaproteobacteria</taxon>
        <taxon>Enterobacterales</taxon>
        <taxon>Enterobacteriaceae</taxon>
        <taxon>Escherichia</taxon>
    </lineage>
</organism>
<name>RAVA_ECOLI</name>
<feature type="chain" id="PRO_0000209370" description="Regulatory ATPase RavA">
    <location>
        <begin position="1"/>
        <end position="498"/>
    </location>
</feature>
<feature type="region of interest" description="AAA+ module" evidence="15">
    <location>
        <begin position="1"/>
        <end position="306"/>
    </location>
</feature>
<feature type="region of interest" description="LARA" evidence="14 15">
    <location>
        <begin position="331"/>
        <end position="437"/>
    </location>
</feature>
<feature type="binding site" evidence="3 16">
    <location>
        <position position="23"/>
    </location>
    <ligand>
        <name>ADP</name>
        <dbReference type="ChEBI" id="CHEBI:456216"/>
    </ligand>
</feature>
<feature type="binding site" evidence="3 16">
    <location>
        <position position="49"/>
    </location>
    <ligand>
        <name>ADP</name>
        <dbReference type="ChEBI" id="CHEBI:456216"/>
    </ligand>
</feature>
<feature type="binding site" evidence="3 16">
    <location>
        <position position="50"/>
    </location>
    <ligand>
        <name>ADP</name>
        <dbReference type="ChEBI" id="CHEBI:456216"/>
    </ligand>
</feature>
<feature type="binding site" evidence="3 16">
    <location>
        <position position="51"/>
    </location>
    <ligand>
        <name>ADP</name>
        <dbReference type="ChEBI" id="CHEBI:456216"/>
    </ligand>
</feature>
<feature type="binding site" evidence="3 16">
    <location>
        <position position="52"/>
    </location>
    <ligand>
        <name>ADP</name>
        <dbReference type="ChEBI" id="CHEBI:456216"/>
    </ligand>
</feature>
<feature type="binding site" evidence="3 16">
    <location>
        <position position="53"/>
    </location>
    <ligand>
        <name>ADP</name>
        <dbReference type="ChEBI" id="CHEBI:456216"/>
    </ligand>
</feature>
<feature type="binding site" evidence="3 16">
    <location>
        <position position="54"/>
    </location>
    <ligand>
        <name>ADP</name>
        <dbReference type="ChEBI" id="CHEBI:456216"/>
    </ligand>
</feature>
<feature type="binding site" evidence="3 16">
    <location>
        <position position="196"/>
    </location>
    <ligand>
        <name>ADP</name>
        <dbReference type="ChEBI" id="CHEBI:456216"/>
    </ligand>
</feature>
<feature type="mutagenesis site" description="Loss of aminoglycoside sensitivity." evidence="4">
    <original>K</original>
    <variation>Q</variation>
    <location>
        <position position="52"/>
    </location>
</feature>
<feature type="mutagenesis site" description="No change in ATPase activity, forms homohexamers, but does not bind to CadA/LdcI." evidence="3">
    <location>
        <begin position="336"/>
        <end position="433"/>
    </location>
</feature>
<feature type="helix" evidence="24">
    <location>
        <begin position="4"/>
        <end position="19"/>
    </location>
</feature>
<feature type="helix" evidence="24">
    <location>
        <begin position="26"/>
        <end position="38"/>
    </location>
</feature>
<feature type="strand" evidence="24">
    <location>
        <begin position="41"/>
        <end position="45"/>
    </location>
</feature>
<feature type="strand" evidence="24">
    <location>
        <begin position="48"/>
        <end position="51"/>
    </location>
</feature>
<feature type="helix" evidence="24">
    <location>
        <begin position="52"/>
        <end position="58"/>
    </location>
</feature>
<feature type="helix" evidence="24">
    <location>
        <begin position="59"/>
        <end position="62"/>
    </location>
</feature>
<feature type="strand" evidence="24">
    <location>
        <begin position="63"/>
        <end position="65"/>
    </location>
</feature>
<feature type="strand" evidence="24">
    <location>
        <begin position="68"/>
        <end position="72"/>
    </location>
</feature>
<feature type="helix" evidence="24">
    <location>
        <begin position="79"/>
        <end position="83"/>
    </location>
</feature>
<feature type="helix" evidence="24">
    <location>
        <begin position="105"/>
        <end position="107"/>
    </location>
</feature>
<feature type="strand" evidence="24">
    <location>
        <begin position="109"/>
        <end position="115"/>
    </location>
</feature>
<feature type="helix" evidence="24">
    <location>
        <begin position="116"/>
        <end position="118"/>
    </location>
</feature>
<feature type="helix" evidence="24">
    <location>
        <begin position="121"/>
        <end position="132"/>
    </location>
</feature>
<feature type="strand" evidence="24">
    <location>
        <begin position="133"/>
        <end position="137"/>
    </location>
</feature>
<feature type="strand" evidence="24">
    <location>
        <begin position="139"/>
        <end position="144"/>
    </location>
</feature>
<feature type="strand" evidence="24">
    <location>
        <begin position="149"/>
        <end position="156"/>
    </location>
</feature>
<feature type="helix" evidence="24">
    <location>
        <begin position="165"/>
        <end position="168"/>
    </location>
</feature>
<feature type="strand" evidence="24">
    <location>
        <begin position="173"/>
        <end position="176"/>
    </location>
</feature>
<feature type="helix" evidence="24">
    <location>
        <begin position="183"/>
        <end position="190"/>
    </location>
</feature>
<feature type="turn" evidence="24">
    <location>
        <begin position="203"/>
        <end position="205"/>
    </location>
</feature>
<feature type="helix" evidence="24">
    <location>
        <begin position="209"/>
        <end position="219"/>
    </location>
</feature>
<feature type="helix" evidence="24">
    <location>
        <begin position="226"/>
        <end position="241"/>
    </location>
</feature>
<feature type="strand" evidence="24">
    <location>
        <begin position="243"/>
        <end position="245"/>
    </location>
</feature>
<feature type="helix" evidence="24">
    <location>
        <begin position="250"/>
        <end position="266"/>
    </location>
</feature>
<feature type="helix" evidence="24">
    <location>
        <begin position="274"/>
        <end position="282"/>
    </location>
</feature>
<feature type="helix" evidence="24">
    <location>
        <begin position="288"/>
        <end position="304"/>
    </location>
</feature>
<feature type="turn" evidence="24">
    <location>
        <begin position="305"/>
        <end position="307"/>
    </location>
</feature>
<feature type="helix" evidence="24">
    <location>
        <begin position="309"/>
        <end position="329"/>
    </location>
</feature>
<feature type="turn" evidence="24">
    <location>
        <begin position="354"/>
        <end position="356"/>
    </location>
</feature>
<feature type="strand" evidence="24">
    <location>
        <begin position="360"/>
        <end position="372"/>
    </location>
</feature>
<feature type="strand" evidence="24">
    <location>
        <begin position="375"/>
        <end position="383"/>
    </location>
</feature>
<feature type="helix" evidence="24">
    <location>
        <begin position="384"/>
        <end position="393"/>
    </location>
</feature>
<feature type="strand" evidence="24">
    <location>
        <begin position="398"/>
        <end position="401"/>
    </location>
</feature>
<feature type="strand" evidence="24">
    <location>
        <begin position="405"/>
        <end position="409"/>
    </location>
</feature>
<feature type="strand" evidence="24">
    <location>
        <begin position="411"/>
        <end position="414"/>
    </location>
</feature>
<feature type="strand" evidence="24">
    <location>
        <begin position="420"/>
        <end position="423"/>
    </location>
</feature>
<feature type="strand" evidence="24">
    <location>
        <begin position="429"/>
        <end position="433"/>
    </location>
</feature>
<feature type="helix" evidence="24">
    <location>
        <begin position="444"/>
        <end position="465"/>
    </location>
</feature>
<feature type="helix" evidence="24">
    <location>
        <begin position="475"/>
        <end position="495"/>
    </location>
</feature>
<sequence length="498" mass="56389">MAHPHLLAERISRLSSSLEKGLYERSHAIRLCLLAALSGESVFLLGPPGIAKSLIARRLKFAFQNARAFEYLMTRFSTPEEVFGPLSIQALKDEGRYERLTSGYLPEAEIVFLDEIWKAGPAILNTLLTAINERQFRNGAHVEKIPMRLLVAASNELPEADSSLEALYDRMLIRLWLDKVQDKANFRSMLTSQQDENDNPVPDALQVTDEEYERWQKEIGEITLPDHVFELIFMLRQQLDKLPDAPYVSDRRWKKAIRLLQASAFFSGRSAVAPVDLILLKDCLWYDAQSLNLIQQQIDVLMTGHAWQQQGMLTRLGAIVQRHLQLQQQQSDKTALTVIRLGGIFSRRQQYQLPVNVTASTLTLLLQKPLKLHDMEVVHISFERSALEQWLSKGGEIRGKLNGIGFAQKLNLEVDSAQHLVVRDVSLQGSTLALPGSSAEGLPGEIKQQLEELESDWRKQHALFSEQQKCLFIPGDWLGRIEASLQDVGAQIRQAQQC</sequence>
<evidence type="ECO:0000255" key="1">
    <source>
        <dbReference type="HAMAP-Rule" id="MF_01625"/>
    </source>
</evidence>
<evidence type="ECO:0000269" key="2">
    <source>
    </source>
</evidence>
<evidence type="ECO:0000269" key="3">
    <source>
    </source>
</evidence>
<evidence type="ECO:0000269" key="4">
    <source>
    </source>
</evidence>
<evidence type="ECO:0000269" key="5">
    <source>
    </source>
</evidence>
<evidence type="ECO:0000269" key="6">
    <source>
    </source>
</evidence>
<evidence type="ECO:0000269" key="7">
    <source>
    </source>
</evidence>
<evidence type="ECO:0000269" key="8">
    <source>
    </source>
</evidence>
<evidence type="ECO:0000269" key="9">
    <source>
    </source>
</evidence>
<evidence type="ECO:0000269" key="10">
    <source>
    </source>
</evidence>
<evidence type="ECO:0000269" key="11">
    <source>
    </source>
</evidence>
<evidence type="ECO:0000303" key="12">
    <source>
    </source>
</evidence>
<evidence type="ECO:0000305" key="13"/>
<evidence type="ECO:0000305" key="14">
    <source>
    </source>
</evidence>
<evidence type="ECO:0000305" key="15">
    <source>
    </source>
</evidence>
<evidence type="ECO:0007744" key="16">
    <source>
        <dbReference type="PDB" id="3NBX"/>
    </source>
</evidence>
<evidence type="ECO:0007744" key="17">
    <source>
        <dbReference type="PDB" id="4UPB"/>
    </source>
</evidence>
<evidence type="ECO:0007744" key="18">
    <source>
        <dbReference type="PDB" id="4UPF"/>
    </source>
</evidence>
<evidence type="ECO:0007744" key="19">
    <source>
        <dbReference type="PDB" id="5FL2"/>
    </source>
</evidence>
<evidence type="ECO:0007744" key="20">
    <source>
        <dbReference type="PDB" id="6Q7L"/>
    </source>
</evidence>
<evidence type="ECO:0007744" key="21">
    <source>
        <dbReference type="PDB" id="6Q7M"/>
    </source>
</evidence>
<evidence type="ECO:0007744" key="22">
    <source>
        <dbReference type="PDB" id="6SZA"/>
    </source>
</evidence>
<evidence type="ECO:0007744" key="23">
    <source>
        <dbReference type="PDB" id="6SZB"/>
    </source>
</evidence>
<evidence type="ECO:0007829" key="24">
    <source>
        <dbReference type="PDB" id="3NBX"/>
    </source>
</evidence>
<keyword id="KW-0002">3D-structure</keyword>
<keyword id="KW-0067">ATP-binding</keyword>
<keyword id="KW-0997">Cell inner membrane</keyword>
<keyword id="KW-1003">Cell membrane</keyword>
<keyword id="KW-0143">Chaperone</keyword>
<keyword id="KW-0963">Cytoplasm</keyword>
<keyword id="KW-0378">Hydrolase</keyword>
<keyword id="KW-0472">Membrane</keyword>
<keyword id="KW-0547">Nucleotide-binding</keyword>
<keyword id="KW-1185">Reference proteome</keyword>
<proteinExistence type="evidence at protein level"/>